<reference key="1">
    <citation type="submission" date="2004-04" db="EMBL/GenBank/DDBJ databases">
        <title>Molecular cloning of pig Znf313 gene.</title>
        <authorList>
            <person name="Wu Q."/>
            <person name="Wang C."/>
            <person name="Ma Y.-X."/>
            <person name="Zhang S.Z."/>
            <person name="Bao J."/>
            <person name="Sun Y."/>
            <person name="Liu Y."/>
            <person name="He G."/>
            <person name="Dong J."/>
        </authorList>
    </citation>
    <scope>NUCLEOTIDE SEQUENCE [MRNA]</scope>
    <source>
        <tissue>Testis</tissue>
    </source>
</reference>
<reference key="2">
    <citation type="journal article" date="2019" name="J. Virol.">
        <title>Porcine RING finger protein 114 inhibits classical swine fever virus replication via the K27-linked polyubiquitination of viral NS4B.</title>
        <authorList>
            <person name="Zhang Y."/>
            <person name="Zhang H."/>
            <person name="Zheng G.L."/>
            <person name="Yang Q."/>
            <person name="Yu S."/>
            <person name="Wang J."/>
            <person name="Li S."/>
            <person name="Li L.F."/>
            <person name="Qiu H.J."/>
        </authorList>
    </citation>
    <scope>FUNCTION</scope>
    <scope>MUTAGENESIS OF CYS-64 AND CYS-67</scope>
    <scope>SUBCELLULAR LOCATION</scope>
    <scope>CATALYTIC ACTIVITY</scope>
    <scope>PATHWAY</scope>
</reference>
<proteinExistence type="evidence at protein level"/>
<sequence length="228" mass="25629">MAAQPQDREGGAQLAGPAAEADPLGRFTCPVCLEVYEKPVQVPCGHVFCSACLQECLKPKKPVCGVCRSTLAPGVRAVELERQIESTETSCHGCRKNFFLSKIRAHVATCSKYQNYIMEGVKATTKDASLQPRNVPNRYTFPCPYCPEKNFDQEGLVEHCKLVHSTDTKSVVCPICASMPWGDPNYRSANFIEHIQRRHQFSYDTFVDYDVDEEDMMNQVLQRSLLDQ</sequence>
<accession>Q6J1I8</accession>
<gene>
    <name type="primary">RNF114</name>
    <name type="synonym">ZNF313</name>
</gene>
<name>RN114_PIG</name>
<evidence type="ECO:0000250" key="1">
    <source>
        <dbReference type="UniProtKB" id="Q9Y508"/>
    </source>
</evidence>
<evidence type="ECO:0000255" key="2">
    <source>
        <dbReference type="PROSITE-ProRule" id="PRU00175"/>
    </source>
</evidence>
<evidence type="ECO:0000255" key="3">
    <source>
        <dbReference type="PROSITE-ProRule" id="PRU01144"/>
    </source>
</evidence>
<evidence type="ECO:0000269" key="4">
    <source>
    </source>
</evidence>
<evidence type="ECO:0000305" key="5"/>
<dbReference type="EC" id="2.3.2.27" evidence="4"/>
<dbReference type="EMBL" id="AY606064">
    <property type="protein sequence ID" value="AAT36620.1"/>
    <property type="molecule type" value="mRNA"/>
</dbReference>
<dbReference type="RefSeq" id="NP_001001869.1">
    <property type="nucleotide sequence ID" value="NM_001001869.1"/>
</dbReference>
<dbReference type="FunCoup" id="Q6J1I8">
    <property type="interactions" value="1703"/>
</dbReference>
<dbReference type="STRING" id="9823.ENSSSCP00000049061"/>
<dbReference type="PaxDb" id="9823-ENSSSCP00000027982"/>
<dbReference type="PeptideAtlas" id="Q6J1I8"/>
<dbReference type="Ensembl" id="ENSSSCT00000044278.3">
    <property type="protein sequence ID" value="ENSSSCP00000049061.1"/>
    <property type="gene ID" value="ENSSSCG00000036129.3"/>
</dbReference>
<dbReference type="Ensembl" id="ENSSSCT00070034635.1">
    <property type="protein sequence ID" value="ENSSSCP00070028932.1"/>
    <property type="gene ID" value="ENSSSCG00070017549.1"/>
</dbReference>
<dbReference type="Ensembl" id="ENSSSCT00085046082">
    <property type="protein sequence ID" value="ENSSSCP00085032074"/>
    <property type="gene ID" value="ENSSSCG00085024040"/>
</dbReference>
<dbReference type="Ensembl" id="ENSSSCT00105021375">
    <property type="protein sequence ID" value="ENSSSCP00105015460"/>
    <property type="gene ID" value="ENSSSCG00105010698"/>
</dbReference>
<dbReference type="Ensembl" id="ENSSSCT00110042571">
    <property type="protein sequence ID" value="ENSSSCP00110029877"/>
    <property type="gene ID" value="ENSSSCG00110022009"/>
</dbReference>
<dbReference type="Ensembl" id="ENSSSCT00115012220">
    <property type="protein sequence ID" value="ENSSSCP00115011546"/>
    <property type="gene ID" value="ENSSSCG00115007009"/>
</dbReference>
<dbReference type="Ensembl" id="ENSSSCT00130026825">
    <property type="protein sequence ID" value="ENSSSCP00130015007"/>
    <property type="gene ID" value="ENSSSCG00130013503"/>
</dbReference>
<dbReference type="GeneID" id="414917"/>
<dbReference type="KEGG" id="ssc:414917"/>
<dbReference type="CTD" id="55905"/>
<dbReference type="VGNC" id="VGNC:108733">
    <property type="gene designation" value="RNF114"/>
</dbReference>
<dbReference type="eggNOG" id="ENOG502QW3F">
    <property type="taxonomic scope" value="Eukaryota"/>
</dbReference>
<dbReference type="GeneTree" id="ENSGT00950000182909"/>
<dbReference type="HOGENOM" id="CLU_092448_1_1_1"/>
<dbReference type="InParanoid" id="Q6J1I8"/>
<dbReference type="OMA" id="RTQCGHT"/>
<dbReference type="OrthoDB" id="6270329at2759"/>
<dbReference type="Reactome" id="R-SSC-983168">
    <property type="pathway name" value="Antigen processing: Ubiquitination &amp; Proteasome degradation"/>
</dbReference>
<dbReference type="UniPathway" id="UPA00143"/>
<dbReference type="Proteomes" id="UP000008227">
    <property type="component" value="Chromosome 17"/>
</dbReference>
<dbReference type="Proteomes" id="UP000314985">
    <property type="component" value="Chromosome 17"/>
</dbReference>
<dbReference type="Proteomes" id="UP000694570">
    <property type="component" value="Unplaced"/>
</dbReference>
<dbReference type="Proteomes" id="UP000694571">
    <property type="component" value="Unplaced"/>
</dbReference>
<dbReference type="Proteomes" id="UP000694720">
    <property type="component" value="Unplaced"/>
</dbReference>
<dbReference type="Proteomes" id="UP000694722">
    <property type="component" value="Unplaced"/>
</dbReference>
<dbReference type="Proteomes" id="UP000694723">
    <property type="component" value="Unplaced"/>
</dbReference>
<dbReference type="Proteomes" id="UP000694724">
    <property type="component" value="Unplaced"/>
</dbReference>
<dbReference type="Proteomes" id="UP000694725">
    <property type="component" value="Unplaced"/>
</dbReference>
<dbReference type="Proteomes" id="UP000694726">
    <property type="component" value="Unplaced"/>
</dbReference>
<dbReference type="Proteomes" id="UP000694727">
    <property type="component" value="Unplaced"/>
</dbReference>
<dbReference type="Proteomes" id="UP000694728">
    <property type="component" value="Unplaced"/>
</dbReference>
<dbReference type="Bgee" id="ENSSSCG00000036129">
    <property type="expression patterns" value="Expressed in oocyte and 43 other cell types or tissues"/>
</dbReference>
<dbReference type="GO" id="GO:0005829">
    <property type="term" value="C:cytosol"/>
    <property type="evidence" value="ECO:0007669"/>
    <property type="project" value="Ensembl"/>
</dbReference>
<dbReference type="GO" id="GO:0005634">
    <property type="term" value="C:nucleus"/>
    <property type="evidence" value="ECO:0007669"/>
    <property type="project" value="UniProtKB-SubCell"/>
</dbReference>
<dbReference type="GO" id="GO:0005886">
    <property type="term" value="C:plasma membrane"/>
    <property type="evidence" value="ECO:0007669"/>
    <property type="project" value="Ensembl"/>
</dbReference>
<dbReference type="GO" id="GO:0061630">
    <property type="term" value="F:ubiquitin protein ligase activity"/>
    <property type="evidence" value="ECO:0000318"/>
    <property type="project" value="GO_Central"/>
</dbReference>
<dbReference type="GO" id="GO:0008270">
    <property type="term" value="F:zinc ion binding"/>
    <property type="evidence" value="ECO:0007669"/>
    <property type="project" value="UniProtKB-KW"/>
</dbReference>
<dbReference type="GO" id="GO:0030154">
    <property type="term" value="P:cell differentiation"/>
    <property type="evidence" value="ECO:0007669"/>
    <property type="project" value="UniProtKB-KW"/>
</dbReference>
<dbReference type="GO" id="GO:0000209">
    <property type="term" value="P:protein polyubiquitination"/>
    <property type="evidence" value="ECO:0000318"/>
    <property type="project" value="GO_Central"/>
</dbReference>
<dbReference type="GO" id="GO:0007283">
    <property type="term" value="P:spermatogenesis"/>
    <property type="evidence" value="ECO:0007669"/>
    <property type="project" value="UniProtKB-KW"/>
</dbReference>
<dbReference type="GO" id="GO:0006511">
    <property type="term" value="P:ubiquitin-dependent protein catabolic process"/>
    <property type="evidence" value="ECO:0000318"/>
    <property type="project" value="GO_Central"/>
</dbReference>
<dbReference type="CDD" id="cd16540">
    <property type="entry name" value="RING-HC_RNF114"/>
    <property type="match status" value="1"/>
</dbReference>
<dbReference type="FunFam" id="3.30.40.10:FF:000408">
    <property type="entry name" value="E3 ubiquitin-protein ligase RNF114"/>
    <property type="match status" value="1"/>
</dbReference>
<dbReference type="Gene3D" id="3.30.160.60">
    <property type="entry name" value="Classic Zinc Finger"/>
    <property type="match status" value="1"/>
</dbReference>
<dbReference type="Gene3D" id="3.30.40.10">
    <property type="entry name" value="Zinc/RING finger domain, C3HC4 (zinc finger)"/>
    <property type="match status" value="1"/>
</dbReference>
<dbReference type="InterPro" id="IPR008598">
    <property type="entry name" value="Di19_Zn-bd"/>
</dbReference>
<dbReference type="InterPro" id="IPR042716">
    <property type="entry name" value="RNF114_RING-HC"/>
</dbReference>
<dbReference type="InterPro" id="IPR051438">
    <property type="entry name" value="RNF_E3_ubiq-protein_ligase"/>
</dbReference>
<dbReference type="InterPro" id="IPR034734">
    <property type="entry name" value="ZF_C2HC_RNF"/>
</dbReference>
<dbReference type="InterPro" id="IPR027370">
    <property type="entry name" value="Znf-RING_euk"/>
</dbReference>
<dbReference type="InterPro" id="IPR001841">
    <property type="entry name" value="Znf_RING"/>
</dbReference>
<dbReference type="InterPro" id="IPR013083">
    <property type="entry name" value="Znf_RING/FYVE/PHD"/>
</dbReference>
<dbReference type="InterPro" id="IPR017907">
    <property type="entry name" value="Znf_RING_CS"/>
</dbReference>
<dbReference type="PANTHER" id="PTHR46016:SF3">
    <property type="entry name" value="E3 UBIQUITIN-PROTEIN LIGASE RNF114"/>
    <property type="match status" value="1"/>
</dbReference>
<dbReference type="PANTHER" id="PTHR46016">
    <property type="entry name" value="ZINC FINGER, RING/FYVE/PHD-TYPE"/>
    <property type="match status" value="1"/>
</dbReference>
<dbReference type="Pfam" id="PF05605">
    <property type="entry name" value="zf-Di19"/>
    <property type="match status" value="1"/>
</dbReference>
<dbReference type="Pfam" id="PF13445">
    <property type="entry name" value="zf-RING_UBOX"/>
    <property type="match status" value="1"/>
</dbReference>
<dbReference type="Pfam" id="PF18574">
    <property type="entry name" value="zf_C2HC_14"/>
    <property type="match status" value="1"/>
</dbReference>
<dbReference type="SMART" id="SM00184">
    <property type="entry name" value="RING"/>
    <property type="match status" value="1"/>
</dbReference>
<dbReference type="SUPFAM" id="SSF57850">
    <property type="entry name" value="RING/U-box"/>
    <property type="match status" value="1"/>
</dbReference>
<dbReference type="PROSITE" id="PS51803">
    <property type="entry name" value="ZF_C2HC_RNF"/>
    <property type="match status" value="1"/>
</dbReference>
<dbReference type="PROSITE" id="PS00518">
    <property type="entry name" value="ZF_RING_1"/>
    <property type="match status" value="1"/>
</dbReference>
<dbReference type="PROSITE" id="PS50089">
    <property type="entry name" value="ZF_RING_2"/>
    <property type="match status" value="1"/>
</dbReference>
<feature type="chain" id="PRO_0000056310" description="E3 ubiquitin-protein ligase RNF114">
    <location>
        <begin position="1"/>
        <end position="228"/>
    </location>
</feature>
<feature type="zinc finger region" description="RING-type" evidence="2">
    <location>
        <begin position="29"/>
        <end position="68"/>
    </location>
</feature>
<feature type="zinc finger region" description="C2HC RNF-type" evidence="3">
    <location>
        <begin position="91"/>
        <end position="110"/>
    </location>
</feature>
<feature type="binding site" evidence="3">
    <location>
        <position position="91"/>
    </location>
    <ligand>
        <name>Zn(2+)</name>
        <dbReference type="ChEBI" id="CHEBI:29105"/>
    </ligand>
</feature>
<feature type="binding site" evidence="3">
    <location>
        <position position="94"/>
    </location>
    <ligand>
        <name>Zn(2+)</name>
        <dbReference type="ChEBI" id="CHEBI:29105"/>
    </ligand>
</feature>
<feature type="binding site" evidence="3">
    <location>
        <position position="106"/>
    </location>
    <ligand>
        <name>Zn(2+)</name>
        <dbReference type="ChEBI" id="CHEBI:29105"/>
    </ligand>
</feature>
<feature type="binding site" evidence="3">
    <location>
        <position position="110"/>
    </location>
    <ligand>
        <name>Zn(2+)</name>
        <dbReference type="ChEBI" id="CHEBI:29105"/>
    </ligand>
</feature>
<feature type="modified residue" description="N6-acetyllysine" evidence="1">
    <location>
        <position position="102"/>
    </location>
</feature>
<feature type="modified residue" description="N6-acetyllysine" evidence="1">
    <location>
        <position position="112"/>
    </location>
</feature>
<feature type="mutagenesis site" description="Complete loss of viral NS4B ubiquitination; in association with A-67." evidence="4">
    <original>C</original>
    <variation>A</variation>
    <location>
        <position position="64"/>
    </location>
</feature>
<feature type="mutagenesis site" description="Complete loss of viral NS4B ubiquitination; in association with A-64." evidence="4">
    <original>C</original>
    <variation>A</variation>
    <location>
        <position position="67"/>
    </location>
</feature>
<organism>
    <name type="scientific">Sus scrofa</name>
    <name type="common">Pig</name>
    <dbReference type="NCBI Taxonomy" id="9823"/>
    <lineage>
        <taxon>Eukaryota</taxon>
        <taxon>Metazoa</taxon>
        <taxon>Chordata</taxon>
        <taxon>Craniata</taxon>
        <taxon>Vertebrata</taxon>
        <taxon>Euteleostomi</taxon>
        <taxon>Mammalia</taxon>
        <taxon>Eutheria</taxon>
        <taxon>Laurasiatheria</taxon>
        <taxon>Artiodactyla</taxon>
        <taxon>Suina</taxon>
        <taxon>Suidae</taxon>
        <taxon>Sus</taxon>
    </lineage>
</organism>
<protein>
    <recommendedName>
        <fullName>E3 ubiquitin-protein ligase RNF114</fullName>
        <ecNumber evidence="4">2.3.2.27</ecNumber>
    </recommendedName>
    <alternativeName>
        <fullName>RING finger protein 114</fullName>
    </alternativeName>
    <alternativeName>
        <fullName evidence="5">RING-type E3 ubiquitin transferase RNF114</fullName>
    </alternativeName>
    <alternativeName>
        <fullName>Zinc finger protein 313</fullName>
    </alternativeName>
</protein>
<comment type="function">
    <text evidence="1 4">E3 ubiquitin-protein ligase that promotes the ubiquitination of various substrates. In turn, participates in the regulation of many biological processes including cell cycle, apoptosis, osteoclastogenesis as well as innate or adaptive immunity. Acts as negative regulator of NF-kappa-B-dependent transcription by promoting the ubiquitination and stabilization of the NF-kappa-B inhibitor TNFAIP3. May promote the ubiquitination of TRAF6 as well. Also acts as a negative regulator of T-cell activation. Inhibits cellular dsRNA responses and interferon production by targeting MAVS component for proteasomal degradation. Ubiquitinates the CDK inhibitor CDKN1A leading to its degradationand probably also CDKN1B and CDKN1C. This activity stimulates cell cycle G1-to-S phase transition and suppresses cellular senescence. May play a role in spermatogenesis (By similarity). Inhibits classical swine fever virus replication by mediating 'K27'-linked ubiquitination of viral NS4B and inducing its degradation via the proteasome (PubMed:31413123).</text>
</comment>
<comment type="catalytic activity">
    <reaction evidence="4">
        <text>S-ubiquitinyl-[E2 ubiquitin-conjugating enzyme]-L-cysteine + [acceptor protein]-L-lysine = [E2 ubiquitin-conjugating enzyme]-L-cysteine + N(6)-ubiquitinyl-[acceptor protein]-L-lysine.</text>
        <dbReference type="EC" id="2.3.2.27"/>
    </reaction>
</comment>
<comment type="pathway">
    <text evidence="4">Protein modification; protein ubiquitination.</text>
</comment>
<comment type="subunit">
    <text evidence="1">Interacts with XAF1, the interaction increases XAF1 stability and proapoptotic effects, and may regulate IFN signaling.</text>
</comment>
<comment type="subcellular location">
    <subcellularLocation>
        <location evidence="4">Cytoplasm</location>
    </subcellularLocation>
    <subcellularLocation>
        <location evidence="1">Nucleus</location>
    </subcellularLocation>
</comment>
<comment type="PTM">
    <text evidence="1">Autoubiquitinated. Polyubiquitinated in the presence of E2 enzymes UBE2D1, UBE2D2 and UBE2D3, but only monoubiquitinated in the presence of UBE2E1.</text>
</comment>
<keyword id="KW-0007">Acetylation</keyword>
<keyword id="KW-0963">Cytoplasm</keyword>
<keyword id="KW-0217">Developmental protein</keyword>
<keyword id="KW-0221">Differentiation</keyword>
<keyword id="KW-0479">Metal-binding</keyword>
<keyword id="KW-0539">Nucleus</keyword>
<keyword id="KW-1185">Reference proteome</keyword>
<keyword id="KW-0744">Spermatogenesis</keyword>
<keyword id="KW-0808">Transferase</keyword>
<keyword id="KW-0832">Ubl conjugation</keyword>
<keyword id="KW-0833">Ubl conjugation pathway</keyword>
<keyword id="KW-0862">Zinc</keyword>
<keyword id="KW-0863">Zinc-finger</keyword>